<accession>A6UT95</accession>
<gene>
    <name evidence="1" type="primary">eif6</name>
    <name type="ordered locus">Maeo_0125</name>
</gene>
<dbReference type="EMBL" id="CP000743">
    <property type="protein sequence ID" value="ABR55717.1"/>
    <property type="molecule type" value="Genomic_DNA"/>
</dbReference>
<dbReference type="RefSeq" id="WP_011972849.1">
    <property type="nucleotide sequence ID" value="NC_009635.1"/>
</dbReference>
<dbReference type="SMR" id="A6UT95"/>
<dbReference type="STRING" id="419665.Maeo_0125"/>
<dbReference type="GeneID" id="5326390"/>
<dbReference type="KEGG" id="mae:Maeo_0125"/>
<dbReference type="eggNOG" id="arCOG04176">
    <property type="taxonomic scope" value="Archaea"/>
</dbReference>
<dbReference type="HOGENOM" id="CLU_071894_1_0_2"/>
<dbReference type="OrthoDB" id="33582at2157"/>
<dbReference type="Proteomes" id="UP000001106">
    <property type="component" value="Chromosome"/>
</dbReference>
<dbReference type="GO" id="GO:0043022">
    <property type="term" value="F:ribosome binding"/>
    <property type="evidence" value="ECO:0007669"/>
    <property type="project" value="InterPro"/>
</dbReference>
<dbReference type="GO" id="GO:0003743">
    <property type="term" value="F:translation initiation factor activity"/>
    <property type="evidence" value="ECO:0007669"/>
    <property type="project" value="UniProtKB-UniRule"/>
</dbReference>
<dbReference type="GO" id="GO:0042256">
    <property type="term" value="P:cytosolic ribosome assembly"/>
    <property type="evidence" value="ECO:0007669"/>
    <property type="project" value="InterPro"/>
</dbReference>
<dbReference type="Gene3D" id="3.75.10.10">
    <property type="entry name" value="L-arginine/glycine Amidinotransferase, Chain A"/>
    <property type="match status" value="1"/>
</dbReference>
<dbReference type="HAMAP" id="MF_00032">
    <property type="entry name" value="eIF_6"/>
    <property type="match status" value="1"/>
</dbReference>
<dbReference type="InterPro" id="IPR002769">
    <property type="entry name" value="eIF6"/>
</dbReference>
<dbReference type="NCBIfam" id="TIGR00323">
    <property type="entry name" value="eIF-6"/>
    <property type="match status" value="1"/>
</dbReference>
<dbReference type="NCBIfam" id="NF003127">
    <property type="entry name" value="PRK04046.1-3"/>
    <property type="match status" value="1"/>
</dbReference>
<dbReference type="PANTHER" id="PTHR10784">
    <property type="entry name" value="TRANSLATION INITIATION FACTOR 6"/>
    <property type="match status" value="1"/>
</dbReference>
<dbReference type="Pfam" id="PF01912">
    <property type="entry name" value="eIF-6"/>
    <property type="match status" value="1"/>
</dbReference>
<dbReference type="PIRSF" id="PIRSF006413">
    <property type="entry name" value="IF-6"/>
    <property type="match status" value="1"/>
</dbReference>
<dbReference type="SMART" id="SM00654">
    <property type="entry name" value="eIF6"/>
    <property type="match status" value="1"/>
</dbReference>
<dbReference type="SUPFAM" id="SSF55909">
    <property type="entry name" value="Pentein"/>
    <property type="match status" value="1"/>
</dbReference>
<feature type="chain" id="PRO_1000002596" description="Translation initiation factor 6">
    <location>
        <begin position="1"/>
        <end position="227"/>
    </location>
</feature>
<proteinExistence type="inferred from homology"/>
<sequence>MIIKEYISGISTIGVLSLSTEKFGLAPYFAEENTINKFKKVLDVPVKALNIGNSSLIGALCCANSYGIILPPFTLNREKTILSDFLKENDIDIIVKEINAKNTAFGNLILLNDKGCIISEELADFRKTFEDIFDVEVVAKNIAELPTVGSNGVATNKGALVHPDTTDEELELIKDVLKLKCIERGTASKGTPSVGACIVANSNGAVIGGDTTGPEMLKIEEGLDLID</sequence>
<name>IF6_META3</name>
<organism>
    <name type="scientific">Methanococcus aeolicus (strain ATCC BAA-1280 / DSM 17508 / OCM 812 / Nankai-3)</name>
    <dbReference type="NCBI Taxonomy" id="419665"/>
    <lineage>
        <taxon>Archaea</taxon>
        <taxon>Methanobacteriati</taxon>
        <taxon>Methanobacteriota</taxon>
        <taxon>Methanomada group</taxon>
        <taxon>Methanococci</taxon>
        <taxon>Methanococcales</taxon>
        <taxon>Methanococcaceae</taxon>
        <taxon>Methanococcus</taxon>
    </lineage>
</organism>
<protein>
    <recommendedName>
        <fullName evidence="1">Translation initiation factor 6</fullName>
        <shortName evidence="1">aIF-6</shortName>
    </recommendedName>
</protein>
<keyword id="KW-0396">Initiation factor</keyword>
<keyword id="KW-0648">Protein biosynthesis</keyword>
<reference key="1">
    <citation type="submission" date="2007-06" db="EMBL/GenBank/DDBJ databases">
        <title>Complete sequence of Methanococcus aeolicus Nankai-3.</title>
        <authorList>
            <consortium name="US DOE Joint Genome Institute"/>
            <person name="Copeland A."/>
            <person name="Lucas S."/>
            <person name="Lapidus A."/>
            <person name="Barry K."/>
            <person name="Glavina del Rio T."/>
            <person name="Dalin E."/>
            <person name="Tice H."/>
            <person name="Pitluck S."/>
            <person name="Chain P."/>
            <person name="Malfatti S."/>
            <person name="Shin M."/>
            <person name="Vergez L."/>
            <person name="Schmutz J."/>
            <person name="Larimer F."/>
            <person name="Land M."/>
            <person name="Hauser L."/>
            <person name="Kyrpides N."/>
            <person name="Lykidis A."/>
            <person name="Sieprawska-Lupa M."/>
            <person name="Whitman W.B."/>
            <person name="Richardson P."/>
        </authorList>
    </citation>
    <scope>NUCLEOTIDE SEQUENCE [LARGE SCALE GENOMIC DNA]</scope>
    <source>
        <strain>ATCC BAA-1280 / DSM 17508 / OCM 812 / Nankai-3</strain>
    </source>
</reference>
<evidence type="ECO:0000255" key="1">
    <source>
        <dbReference type="HAMAP-Rule" id="MF_00032"/>
    </source>
</evidence>
<comment type="function">
    <text evidence="1">Binds to the 50S ribosomal subunit and prevents its association with the 30S ribosomal subunit to form the 70S initiation complex.</text>
</comment>
<comment type="similarity">
    <text evidence="1">Belongs to the eIF-6 family.</text>
</comment>